<name>CITD_KLEPN</name>
<organism>
    <name type="scientific">Klebsiella pneumoniae</name>
    <dbReference type="NCBI Taxonomy" id="573"/>
    <lineage>
        <taxon>Bacteria</taxon>
        <taxon>Pseudomonadati</taxon>
        <taxon>Pseudomonadota</taxon>
        <taxon>Gammaproteobacteria</taxon>
        <taxon>Enterobacterales</taxon>
        <taxon>Enterobacteriaceae</taxon>
        <taxon>Klebsiella/Raoultella group</taxon>
        <taxon>Klebsiella</taxon>
        <taxon>Klebsiella pneumoniae complex</taxon>
    </lineage>
</organism>
<dbReference type="EMBL" id="X79817">
    <property type="protein sequence ID" value="CAA56215.1"/>
    <property type="molecule type" value="Genomic_DNA"/>
</dbReference>
<dbReference type="PIR" id="S60774">
    <property type="entry name" value="AYKBL"/>
</dbReference>
<dbReference type="RefSeq" id="WP_004151373.1">
    <property type="nucleotide sequence ID" value="NZ_WXZY01000006.1"/>
</dbReference>
<dbReference type="SMR" id="P02903"/>
<dbReference type="OMA" id="DENINWE"/>
<dbReference type="BioCyc" id="MetaCyc:MONOMER-17000"/>
<dbReference type="GO" id="GO:0005737">
    <property type="term" value="C:cytoplasm"/>
    <property type="evidence" value="ECO:0007669"/>
    <property type="project" value="UniProtKB-SubCell"/>
</dbReference>
<dbReference type="HAMAP" id="MF_00805">
    <property type="entry name" value="CitD"/>
    <property type="match status" value="1"/>
</dbReference>
<dbReference type="InterPro" id="IPR006495">
    <property type="entry name" value="CitD"/>
</dbReference>
<dbReference type="InterPro" id="IPR023439">
    <property type="entry name" value="Mal_deCO2ase/Cit_lyase_ACP"/>
</dbReference>
<dbReference type="NCBIfam" id="TIGR01608">
    <property type="entry name" value="citD"/>
    <property type="match status" value="1"/>
</dbReference>
<dbReference type="NCBIfam" id="NF009726">
    <property type="entry name" value="PRK13253.1"/>
    <property type="match status" value="1"/>
</dbReference>
<dbReference type="Pfam" id="PF06857">
    <property type="entry name" value="ACP"/>
    <property type="match status" value="1"/>
</dbReference>
<dbReference type="PIRSF" id="PIRSF002736">
    <property type="entry name" value="Citrt_lyas_gamma"/>
    <property type="match status" value="1"/>
</dbReference>
<accession>P02903</accession>
<keyword id="KW-0963">Cytoplasm</keyword>
<keyword id="KW-0903">Direct protein sequencing</keyword>
<keyword id="KW-0597">Phosphoprotein</keyword>
<comment type="function">
    <text>Covalent carrier of the coenzyme of citrate lyase.</text>
</comment>
<comment type="subunit">
    <text>Oligomer with a subunit composition of (alpha,beta,gamma)6.</text>
</comment>
<comment type="subcellular location">
    <subcellularLocation>
        <location>Cytoplasm</location>
    </subcellularLocation>
</comment>
<comment type="similarity">
    <text evidence="2">Belongs to the CitD family.</text>
</comment>
<feature type="chain" id="PRO_0000214701" description="Citrate lyase acyl carrier protein">
    <location>
        <begin position="1"/>
        <end position="97"/>
    </location>
</feature>
<feature type="modified residue" description="O-(phosphoribosyl dephospho-coenzyme A)serine" evidence="1">
    <location>
        <position position="14"/>
    </location>
</feature>
<feature type="sequence conflict" description="In Ref. 2; AA sequence." evidence="2" ref="2">
    <original>Q</original>
    <variation>E</variation>
    <location>
        <position position="40"/>
    </location>
</feature>
<feature type="sequence conflict" description="In Ref. 2; AA sequence." evidence="2" ref="2">
    <original>E</original>
    <variation>Q</variation>
    <location>
        <position position="46"/>
    </location>
</feature>
<feature type="sequence conflict" description="In Ref. 2; AA sequence." evidence="2" ref="2">
    <original>QANVVVDDKGALECVLR</original>
    <variation>ECDNVQL</variation>
    <location>
        <begin position="60"/>
        <end position="76"/>
    </location>
</feature>
<feature type="sequence conflict" description="In Ref. 2; AA sequence." evidence="2" ref="2">
    <location>
        <begin position="86"/>
        <end position="93"/>
    </location>
</feature>
<feature type="sequence conflict" description="In Ref. 2; AA sequence." evidence="2" ref="2">
    <original>SQL</original>
    <variation>QQ</variation>
    <location>
        <begin position="95"/>
        <end position="97"/>
    </location>
</feature>
<gene>
    <name type="primary">citD</name>
</gene>
<sequence>MEMKIDALAGTLESSDVMVRIGPAAQPGIQLEIDSIVKQQFGAAIEQVVRETLAQLGVKQANVVVDDKGALECVLRARVQAAALRAAQQTQLQWSQL</sequence>
<protein>
    <recommendedName>
        <fullName>Citrate lyase acyl carrier protein</fullName>
    </recommendedName>
    <alternativeName>
        <fullName>Citrate lyase gamma chain</fullName>
    </alternativeName>
</protein>
<evidence type="ECO:0000269" key="1">
    <source>
    </source>
</evidence>
<evidence type="ECO:0000305" key="2"/>
<reference key="1">
    <citation type="journal article" date="1994" name="Mol. Microbiol.">
        <title>Klebsiella pneumoniae genes for citrate lyase and citrate lyase ligase: localization, sequencing, and expression.</title>
        <authorList>
            <person name="Bott M."/>
            <person name="Dimroth P."/>
        </authorList>
    </citation>
    <scope>NUCLEOTIDE SEQUENCE [GENOMIC DNA]</scope>
    <source>
        <strain>ATCC 13882 / NBRC 13541 / NCTC 8172</strain>
    </source>
</reference>
<reference key="2">
    <citation type="journal article" date="1978" name="Eur. J. Biochem.">
        <title>Amino-acid sequence of citrate-lyase acyl-carrier protein from Klebsiella aerogenes.</title>
        <authorList>
            <person name="Beyreuther K."/>
            <person name="Boehmer H."/>
            <person name="Dimroth P."/>
        </authorList>
    </citation>
    <scope>PROTEIN SEQUENCE</scope>
    <scope>PROSTHETIC GROUP AT SER-14</scope>
    <source>
        <strain>ATCC 13882 / NBRC 13541 / NCTC 8172</strain>
    </source>
</reference>
<proteinExistence type="evidence at protein level"/>